<keyword id="KW-0963">Cytoplasm</keyword>
<keyword id="KW-0570">Pentose shunt</keyword>
<keyword id="KW-1185">Reference proteome</keyword>
<keyword id="KW-0704">Schiff base</keyword>
<keyword id="KW-0808">Transferase</keyword>
<sequence length="221" mass="24224">MKFFIDTANLDEIKEAHSLGILDGVTTNPSLIAKEGIANREDFIRHIKTICELIQAPVSAEAVSTDAEKMIVEARSLAAIDPHVVVKIPMTIDGLKAVRQLSEEGIKTNVTLVFSPLQALMAAKAGATYISPFVGRLDDISADGMNLVEEILEIFSNYLFETEIIVASVRNPLHVLAAAKLGADIATIPFKVIDQLAHHPLTDLGVERFLKDWEKVEKQRV</sequence>
<dbReference type="EC" id="2.2.1.2" evidence="1"/>
<dbReference type="EMBL" id="CP000478">
    <property type="protein sequence ID" value="ABK15754.1"/>
    <property type="molecule type" value="Genomic_DNA"/>
</dbReference>
<dbReference type="RefSeq" id="WP_011696927.1">
    <property type="nucleotide sequence ID" value="NC_008554.1"/>
</dbReference>
<dbReference type="SMR" id="A0LEA2"/>
<dbReference type="FunCoup" id="A0LEA2">
    <property type="interactions" value="231"/>
</dbReference>
<dbReference type="STRING" id="335543.Sfum_0051"/>
<dbReference type="KEGG" id="sfu:Sfum_0051"/>
<dbReference type="eggNOG" id="COG0176">
    <property type="taxonomic scope" value="Bacteria"/>
</dbReference>
<dbReference type="HOGENOM" id="CLU_079764_0_0_7"/>
<dbReference type="InParanoid" id="A0LEA2"/>
<dbReference type="OrthoDB" id="9807051at2"/>
<dbReference type="UniPathway" id="UPA00115">
    <property type="reaction ID" value="UER00414"/>
</dbReference>
<dbReference type="Proteomes" id="UP000001784">
    <property type="component" value="Chromosome"/>
</dbReference>
<dbReference type="GO" id="GO:0005737">
    <property type="term" value="C:cytoplasm"/>
    <property type="evidence" value="ECO:0007669"/>
    <property type="project" value="UniProtKB-SubCell"/>
</dbReference>
<dbReference type="GO" id="GO:0016832">
    <property type="term" value="F:aldehyde-lyase activity"/>
    <property type="evidence" value="ECO:0007669"/>
    <property type="project" value="InterPro"/>
</dbReference>
<dbReference type="GO" id="GO:0004801">
    <property type="term" value="F:transaldolase activity"/>
    <property type="evidence" value="ECO:0007669"/>
    <property type="project" value="UniProtKB-UniRule"/>
</dbReference>
<dbReference type="GO" id="GO:0005975">
    <property type="term" value="P:carbohydrate metabolic process"/>
    <property type="evidence" value="ECO:0007669"/>
    <property type="project" value="InterPro"/>
</dbReference>
<dbReference type="GO" id="GO:0006098">
    <property type="term" value="P:pentose-phosphate shunt"/>
    <property type="evidence" value="ECO:0007669"/>
    <property type="project" value="UniProtKB-UniRule"/>
</dbReference>
<dbReference type="CDD" id="cd00956">
    <property type="entry name" value="Transaldolase_FSA"/>
    <property type="match status" value="1"/>
</dbReference>
<dbReference type="FunFam" id="3.20.20.70:FF:000018">
    <property type="entry name" value="Probable transaldolase"/>
    <property type="match status" value="1"/>
</dbReference>
<dbReference type="Gene3D" id="3.20.20.70">
    <property type="entry name" value="Aldolase class I"/>
    <property type="match status" value="1"/>
</dbReference>
<dbReference type="HAMAP" id="MF_00494">
    <property type="entry name" value="Transaldolase_3b"/>
    <property type="match status" value="1"/>
</dbReference>
<dbReference type="InterPro" id="IPR013785">
    <property type="entry name" value="Aldolase_TIM"/>
</dbReference>
<dbReference type="InterPro" id="IPR001585">
    <property type="entry name" value="TAL/FSA"/>
</dbReference>
<dbReference type="InterPro" id="IPR022999">
    <property type="entry name" value="Transaldolase_3B"/>
</dbReference>
<dbReference type="InterPro" id="IPR004731">
    <property type="entry name" value="Transaldolase_3B/F6P_aldolase"/>
</dbReference>
<dbReference type="InterPro" id="IPR018225">
    <property type="entry name" value="Transaldolase_AS"/>
</dbReference>
<dbReference type="InterPro" id="IPR033919">
    <property type="entry name" value="TSA/FSA_arc/bac"/>
</dbReference>
<dbReference type="NCBIfam" id="TIGR00875">
    <property type="entry name" value="fsa_talC_mipB"/>
    <property type="match status" value="1"/>
</dbReference>
<dbReference type="PANTHER" id="PTHR10683:SF40">
    <property type="entry name" value="FRUCTOSE-6-PHOSPHATE ALDOLASE 1-RELATED"/>
    <property type="match status" value="1"/>
</dbReference>
<dbReference type="PANTHER" id="PTHR10683">
    <property type="entry name" value="TRANSALDOLASE"/>
    <property type="match status" value="1"/>
</dbReference>
<dbReference type="Pfam" id="PF00923">
    <property type="entry name" value="TAL_FSA"/>
    <property type="match status" value="1"/>
</dbReference>
<dbReference type="SUPFAM" id="SSF51569">
    <property type="entry name" value="Aldolase"/>
    <property type="match status" value="1"/>
</dbReference>
<dbReference type="PROSITE" id="PS01054">
    <property type="entry name" value="TRANSALDOLASE_1"/>
    <property type="match status" value="1"/>
</dbReference>
<dbReference type="PROSITE" id="PS00958">
    <property type="entry name" value="TRANSALDOLASE_2"/>
    <property type="match status" value="1"/>
</dbReference>
<name>TAL_SYNFM</name>
<feature type="chain" id="PRO_1000126363" description="Probable transaldolase">
    <location>
        <begin position="1"/>
        <end position="221"/>
    </location>
</feature>
<feature type="active site" description="Schiff-base intermediate with substrate" evidence="1">
    <location>
        <position position="87"/>
    </location>
</feature>
<reference key="1">
    <citation type="submission" date="2006-10" db="EMBL/GenBank/DDBJ databases">
        <title>Complete sequence of Syntrophobacter fumaroxidans MPOB.</title>
        <authorList>
            <consortium name="US DOE Joint Genome Institute"/>
            <person name="Copeland A."/>
            <person name="Lucas S."/>
            <person name="Lapidus A."/>
            <person name="Barry K."/>
            <person name="Detter J.C."/>
            <person name="Glavina del Rio T."/>
            <person name="Hammon N."/>
            <person name="Israni S."/>
            <person name="Pitluck S."/>
            <person name="Goltsman E.G."/>
            <person name="Martinez M."/>
            <person name="Schmutz J."/>
            <person name="Larimer F."/>
            <person name="Land M."/>
            <person name="Hauser L."/>
            <person name="Kyrpides N."/>
            <person name="Kim E."/>
            <person name="Boone D.R."/>
            <person name="Brockman F."/>
            <person name="Culley D."/>
            <person name="Ferry J."/>
            <person name="Gunsalus R."/>
            <person name="McInerney M.J."/>
            <person name="Morrison M."/>
            <person name="Plugge C."/>
            <person name="Rohlin L."/>
            <person name="Scholten J."/>
            <person name="Sieber J."/>
            <person name="Stams A.J.M."/>
            <person name="Worm P."/>
            <person name="Henstra A.M."/>
            <person name="Richardson P."/>
        </authorList>
    </citation>
    <scope>NUCLEOTIDE SEQUENCE [LARGE SCALE GENOMIC DNA]</scope>
    <source>
        <strain>DSM 10017 / MPOB</strain>
    </source>
</reference>
<comment type="function">
    <text evidence="1">Transaldolase is important for the balance of metabolites in the pentose-phosphate pathway.</text>
</comment>
<comment type="catalytic activity">
    <reaction evidence="1">
        <text>D-sedoheptulose 7-phosphate + D-glyceraldehyde 3-phosphate = D-erythrose 4-phosphate + beta-D-fructose 6-phosphate</text>
        <dbReference type="Rhea" id="RHEA:17053"/>
        <dbReference type="ChEBI" id="CHEBI:16897"/>
        <dbReference type="ChEBI" id="CHEBI:57483"/>
        <dbReference type="ChEBI" id="CHEBI:57634"/>
        <dbReference type="ChEBI" id="CHEBI:59776"/>
        <dbReference type="EC" id="2.2.1.2"/>
    </reaction>
</comment>
<comment type="pathway">
    <text evidence="1">Carbohydrate degradation; pentose phosphate pathway; D-glyceraldehyde 3-phosphate and beta-D-fructose 6-phosphate from D-ribose 5-phosphate and D-xylulose 5-phosphate (non-oxidative stage): step 2/3.</text>
</comment>
<comment type="subcellular location">
    <subcellularLocation>
        <location evidence="1">Cytoplasm</location>
    </subcellularLocation>
</comment>
<comment type="similarity">
    <text evidence="1">Belongs to the transaldolase family. Type 3B subfamily.</text>
</comment>
<accession>A0LEA2</accession>
<organism>
    <name type="scientific">Syntrophobacter fumaroxidans (strain DSM 10017 / MPOB)</name>
    <dbReference type="NCBI Taxonomy" id="335543"/>
    <lineage>
        <taxon>Bacteria</taxon>
        <taxon>Pseudomonadati</taxon>
        <taxon>Thermodesulfobacteriota</taxon>
        <taxon>Syntrophobacteria</taxon>
        <taxon>Syntrophobacterales</taxon>
        <taxon>Syntrophobacteraceae</taxon>
        <taxon>Syntrophobacter</taxon>
    </lineage>
</organism>
<protein>
    <recommendedName>
        <fullName evidence="1">Probable transaldolase</fullName>
        <ecNumber evidence="1">2.2.1.2</ecNumber>
    </recommendedName>
</protein>
<proteinExistence type="inferred from homology"/>
<gene>
    <name evidence="1" type="primary">tal</name>
    <name type="ordered locus">Sfum_0051</name>
</gene>
<evidence type="ECO:0000255" key="1">
    <source>
        <dbReference type="HAMAP-Rule" id="MF_00494"/>
    </source>
</evidence>